<reference key="1">
    <citation type="journal article" date="2006" name="Proc. Natl. Acad. Sci. U.S.A.">
        <title>Identification of genes subject to positive selection in uropathogenic strains of Escherichia coli: a comparative genomics approach.</title>
        <authorList>
            <person name="Chen S.L."/>
            <person name="Hung C.-S."/>
            <person name="Xu J."/>
            <person name="Reigstad C.S."/>
            <person name="Magrini V."/>
            <person name="Sabo A."/>
            <person name="Blasiar D."/>
            <person name="Bieri T."/>
            <person name="Meyer R.R."/>
            <person name="Ozersky P."/>
            <person name="Armstrong J.R."/>
            <person name="Fulton R.S."/>
            <person name="Latreille J.P."/>
            <person name="Spieth J."/>
            <person name="Hooton T.M."/>
            <person name="Mardis E.R."/>
            <person name="Hultgren S.J."/>
            <person name="Gordon J.I."/>
        </authorList>
    </citation>
    <scope>NUCLEOTIDE SEQUENCE [LARGE SCALE GENOMIC DNA]</scope>
    <source>
        <strain>UTI89 / UPEC</strain>
    </source>
</reference>
<accession>Q1RD66</accession>
<proteinExistence type="inferred from homology"/>
<protein>
    <recommendedName>
        <fullName evidence="1">Beta-ketoacyl-[acyl-carrier-protein] synthase III</fullName>
        <shortName evidence="1">Beta-ketoacyl-ACP synthase III</shortName>
        <shortName evidence="1">KAS III</shortName>
        <ecNumber evidence="1">2.3.1.180</ecNumber>
    </recommendedName>
    <alternativeName>
        <fullName evidence="1">3-oxoacyl-[acyl-carrier-protein] synthase 3</fullName>
    </alternativeName>
    <alternativeName>
        <fullName evidence="1">3-oxoacyl-[acyl-carrier-protein] synthase III</fullName>
    </alternativeName>
</protein>
<sequence length="317" mass="33515">MYTKIIGTGSYLPEQVRTNADLEKMVDTSDEWIVTRTGIRERHIAAPNETVSTMGFEAATRAIEMAGIEKDQIGLIVVATTSATHAFPSAACQIQSMLGIKGCPAFDVAAACAGFTYALSVADQYVKSGAVKYALVVGSDVLARTCDPTDRGTIIIFGDGAGAAVLAASEEPGIISTHLHADGSYGELLTLPNADRVNPENSIHLTMAGNEVFKVAVTELAHIVDETLAANNLDRSQLDWLVPHQANLRIISATAKKLGMSMDNVVVTLDRHGNTSAASVPCALDEAVRDGRIKPGQLVLLEAFGGGFTWGSALVRF</sequence>
<dbReference type="EC" id="2.3.1.180" evidence="1"/>
<dbReference type="EMBL" id="CP000243">
    <property type="protein sequence ID" value="ABE06698.1"/>
    <property type="molecule type" value="Genomic_DNA"/>
</dbReference>
<dbReference type="RefSeq" id="WP_000288132.1">
    <property type="nucleotide sequence ID" value="NZ_CP064825.1"/>
</dbReference>
<dbReference type="SMR" id="Q1RD66"/>
<dbReference type="GeneID" id="93776317"/>
<dbReference type="KEGG" id="eci:UTI89_C1216"/>
<dbReference type="HOGENOM" id="CLU_039592_4_1_6"/>
<dbReference type="UniPathway" id="UPA00094"/>
<dbReference type="Proteomes" id="UP000001952">
    <property type="component" value="Chromosome"/>
</dbReference>
<dbReference type="GO" id="GO:0005737">
    <property type="term" value="C:cytoplasm"/>
    <property type="evidence" value="ECO:0007669"/>
    <property type="project" value="UniProtKB-SubCell"/>
</dbReference>
<dbReference type="GO" id="GO:0004315">
    <property type="term" value="F:3-oxoacyl-[acyl-carrier-protein] synthase activity"/>
    <property type="evidence" value="ECO:0007669"/>
    <property type="project" value="InterPro"/>
</dbReference>
<dbReference type="GO" id="GO:0033818">
    <property type="term" value="F:beta-ketoacyl-acyl-carrier-protein synthase III activity"/>
    <property type="evidence" value="ECO:0007669"/>
    <property type="project" value="UniProtKB-UniRule"/>
</dbReference>
<dbReference type="GO" id="GO:0006633">
    <property type="term" value="P:fatty acid biosynthetic process"/>
    <property type="evidence" value="ECO:0007669"/>
    <property type="project" value="UniProtKB-UniRule"/>
</dbReference>
<dbReference type="CDD" id="cd00830">
    <property type="entry name" value="KAS_III"/>
    <property type="match status" value="1"/>
</dbReference>
<dbReference type="FunFam" id="3.40.47.10:FF:000004">
    <property type="entry name" value="3-oxoacyl-[acyl-carrier-protein] synthase 3"/>
    <property type="match status" value="1"/>
</dbReference>
<dbReference type="Gene3D" id="3.40.47.10">
    <property type="match status" value="1"/>
</dbReference>
<dbReference type="HAMAP" id="MF_01815">
    <property type="entry name" value="FabH"/>
    <property type="match status" value="1"/>
</dbReference>
<dbReference type="InterPro" id="IPR013747">
    <property type="entry name" value="ACP_syn_III_C"/>
</dbReference>
<dbReference type="InterPro" id="IPR013751">
    <property type="entry name" value="ACP_syn_III_N"/>
</dbReference>
<dbReference type="InterPro" id="IPR004655">
    <property type="entry name" value="FabH"/>
</dbReference>
<dbReference type="InterPro" id="IPR016039">
    <property type="entry name" value="Thiolase-like"/>
</dbReference>
<dbReference type="NCBIfam" id="TIGR00747">
    <property type="entry name" value="fabH"/>
    <property type="match status" value="1"/>
</dbReference>
<dbReference type="NCBIfam" id="NF006829">
    <property type="entry name" value="PRK09352.1"/>
    <property type="match status" value="1"/>
</dbReference>
<dbReference type="PANTHER" id="PTHR43091">
    <property type="entry name" value="3-OXOACYL-[ACYL-CARRIER-PROTEIN] SYNTHASE"/>
    <property type="match status" value="1"/>
</dbReference>
<dbReference type="PANTHER" id="PTHR43091:SF1">
    <property type="entry name" value="BETA-KETOACYL-[ACYL-CARRIER-PROTEIN] SYNTHASE III, CHLOROPLASTIC"/>
    <property type="match status" value="1"/>
</dbReference>
<dbReference type="Pfam" id="PF08545">
    <property type="entry name" value="ACP_syn_III"/>
    <property type="match status" value="1"/>
</dbReference>
<dbReference type="Pfam" id="PF08541">
    <property type="entry name" value="ACP_syn_III_C"/>
    <property type="match status" value="1"/>
</dbReference>
<dbReference type="SUPFAM" id="SSF53901">
    <property type="entry name" value="Thiolase-like"/>
    <property type="match status" value="1"/>
</dbReference>
<comment type="function">
    <text evidence="1">Catalyzes the condensation reaction of fatty acid synthesis by the addition to an acyl acceptor of two carbons from malonyl-ACP. Catalyzes the first condensation reaction which initiates fatty acid synthesis and may therefore play a role in governing the total rate of fatty acid production. Possesses both acetoacetyl-ACP synthase and acetyl transacylase activities. Its substrate specificity determines the biosynthesis of branched-chain and/or straight-chain of fatty acids.</text>
</comment>
<comment type="catalytic activity">
    <reaction evidence="1">
        <text>malonyl-[ACP] + acetyl-CoA + H(+) = 3-oxobutanoyl-[ACP] + CO2 + CoA</text>
        <dbReference type="Rhea" id="RHEA:12080"/>
        <dbReference type="Rhea" id="RHEA-COMP:9623"/>
        <dbReference type="Rhea" id="RHEA-COMP:9625"/>
        <dbReference type="ChEBI" id="CHEBI:15378"/>
        <dbReference type="ChEBI" id="CHEBI:16526"/>
        <dbReference type="ChEBI" id="CHEBI:57287"/>
        <dbReference type="ChEBI" id="CHEBI:57288"/>
        <dbReference type="ChEBI" id="CHEBI:78449"/>
        <dbReference type="ChEBI" id="CHEBI:78450"/>
        <dbReference type="EC" id="2.3.1.180"/>
    </reaction>
</comment>
<comment type="pathway">
    <text evidence="1">Lipid metabolism; fatty acid biosynthesis.</text>
</comment>
<comment type="subunit">
    <text evidence="1">Homodimer.</text>
</comment>
<comment type="subcellular location">
    <subcellularLocation>
        <location evidence="1">Cytoplasm</location>
    </subcellularLocation>
</comment>
<comment type="domain">
    <text evidence="1">The last Arg residue of the ACP-binding site is essential for the weak association between ACP/AcpP and FabH.</text>
</comment>
<comment type="similarity">
    <text evidence="1">Belongs to the thiolase-like superfamily. FabH family.</text>
</comment>
<evidence type="ECO:0000255" key="1">
    <source>
        <dbReference type="HAMAP-Rule" id="MF_01815"/>
    </source>
</evidence>
<feature type="chain" id="PRO_1000056356" description="Beta-ketoacyl-[acyl-carrier-protein] synthase III">
    <location>
        <begin position="1"/>
        <end position="317"/>
    </location>
</feature>
<feature type="region of interest" description="ACP-binding" evidence="1">
    <location>
        <begin position="245"/>
        <end position="249"/>
    </location>
</feature>
<feature type="active site" evidence="1">
    <location>
        <position position="112"/>
    </location>
</feature>
<feature type="active site" evidence="1">
    <location>
        <position position="244"/>
    </location>
</feature>
<feature type="active site" evidence="1">
    <location>
        <position position="274"/>
    </location>
</feature>
<name>FABH_ECOUT</name>
<gene>
    <name evidence="1" type="primary">fabH</name>
    <name type="ordered locus">UTI89_C1216</name>
</gene>
<keyword id="KW-0012">Acyltransferase</keyword>
<keyword id="KW-0963">Cytoplasm</keyword>
<keyword id="KW-0275">Fatty acid biosynthesis</keyword>
<keyword id="KW-0276">Fatty acid metabolism</keyword>
<keyword id="KW-0444">Lipid biosynthesis</keyword>
<keyword id="KW-0443">Lipid metabolism</keyword>
<keyword id="KW-0511">Multifunctional enzyme</keyword>
<keyword id="KW-0808">Transferase</keyword>
<organism>
    <name type="scientific">Escherichia coli (strain UTI89 / UPEC)</name>
    <dbReference type="NCBI Taxonomy" id="364106"/>
    <lineage>
        <taxon>Bacteria</taxon>
        <taxon>Pseudomonadati</taxon>
        <taxon>Pseudomonadota</taxon>
        <taxon>Gammaproteobacteria</taxon>
        <taxon>Enterobacterales</taxon>
        <taxon>Enterobacteriaceae</taxon>
        <taxon>Escherichia</taxon>
    </lineage>
</organism>